<feature type="chain" id="PRO_0000065906" description="Vacuolar protein sorting-associated protein 62">
    <location>
        <begin position="1"/>
        <end position="467"/>
    </location>
</feature>
<feature type="transmembrane region" description="Helical" evidence="1">
    <location>
        <begin position="17"/>
        <end position="37"/>
    </location>
</feature>
<feature type="glycosylation site" description="N-linked (GlcNAc...) asparagine" evidence="1">
    <location>
        <position position="74"/>
    </location>
</feature>
<feature type="glycosylation site" description="N-linked (GlcNAc...) asparagine" evidence="1">
    <location>
        <position position="145"/>
    </location>
</feature>
<sequence length="467" mass="54515">MRISKNSHKRQRTRLYFLVTFIIYSIIPCRAVLVPWLDDDPFEATLLEMGDEPWSKDILSSTPPLHPSEVTEDNKSLKQRGNVPQYVIDNSPLLHLYSEEKYWPADVKDFVKRFQLRDHSGEKIINEHLRDLSDLQEYYSVELENGTWGRVSSEGTYMTSLDDFDKGPDWLLGEQPEYGTGHIKKAPAVLFVVDKGNGWVDAFWFYFYPFNWGPYIMGSGPWGNHVGDWEHSLVRFYKGEPQYLWMSAHGGGSAYKFEAIEKIKRLRRVDGKLTNEVIKKPLIFSARGTHAHYASVGQHAHDVPFFFMPLSDFTDRGPLWDPSLNYYAYTVTVGEKMTPCGAEETKMGLEWLSFKGAWGDKQLRPRDPRQKWCPFQWKYIDGPKGPLFKNMERVSLCQRFKWWNFWKGCPARRYIKRGEGLDAEKNDLVGDNCGILLYNIRPKWLRSILRFLTWRGSVCFIMDYFTG</sequence>
<proteinExistence type="evidence at protein level"/>
<evidence type="ECO:0000255" key="1"/>
<evidence type="ECO:0000269" key="2">
    <source>
    </source>
</evidence>
<evidence type="ECO:0000269" key="3">
    <source>
    </source>
</evidence>
<evidence type="ECO:0000305" key="4"/>
<reference key="1">
    <citation type="journal article" date="1997" name="Nature">
        <title>The nucleotide sequence of Saccharomyces cerevisiae chromosome VII.</title>
        <authorList>
            <person name="Tettelin H."/>
            <person name="Agostoni-Carbone M.L."/>
            <person name="Albermann K."/>
            <person name="Albers M."/>
            <person name="Arroyo J."/>
            <person name="Backes U."/>
            <person name="Barreiros T."/>
            <person name="Bertani I."/>
            <person name="Bjourson A.J."/>
            <person name="Brueckner M."/>
            <person name="Bruschi C.V."/>
            <person name="Carignani G."/>
            <person name="Castagnoli L."/>
            <person name="Cerdan E."/>
            <person name="Clemente M.L."/>
            <person name="Coblenz A."/>
            <person name="Coglievina M."/>
            <person name="Coissac E."/>
            <person name="Defoor E."/>
            <person name="Del Bino S."/>
            <person name="Delius H."/>
            <person name="Delneri D."/>
            <person name="de Wergifosse P."/>
            <person name="Dujon B."/>
            <person name="Durand P."/>
            <person name="Entian K.-D."/>
            <person name="Eraso P."/>
            <person name="Escribano V."/>
            <person name="Fabiani L."/>
            <person name="Fartmann B."/>
            <person name="Feroli F."/>
            <person name="Feuermann M."/>
            <person name="Frontali L."/>
            <person name="Garcia-Gonzalez M."/>
            <person name="Garcia-Saez M.I."/>
            <person name="Goffeau A."/>
            <person name="Guerreiro P."/>
            <person name="Hani J."/>
            <person name="Hansen M."/>
            <person name="Hebling U."/>
            <person name="Hernandez K."/>
            <person name="Heumann K."/>
            <person name="Hilger F."/>
            <person name="Hofmann B."/>
            <person name="Indge K.J."/>
            <person name="James C.M."/>
            <person name="Klima R."/>
            <person name="Koetter P."/>
            <person name="Kramer B."/>
            <person name="Kramer W."/>
            <person name="Lauquin G."/>
            <person name="Leuther H."/>
            <person name="Louis E.J."/>
            <person name="Maillier E."/>
            <person name="Marconi A."/>
            <person name="Martegani E."/>
            <person name="Mazon M.J."/>
            <person name="Mazzoni C."/>
            <person name="McReynolds A.D.K."/>
            <person name="Melchioretto P."/>
            <person name="Mewes H.-W."/>
            <person name="Minenkova O."/>
            <person name="Mueller-Auer S."/>
            <person name="Nawrocki A."/>
            <person name="Netter P."/>
            <person name="Neu R."/>
            <person name="Nombela C."/>
            <person name="Oliver S.G."/>
            <person name="Panzeri L."/>
            <person name="Paoluzi S."/>
            <person name="Plevani P."/>
            <person name="Portetelle D."/>
            <person name="Portillo F."/>
            <person name="Potier S."/>
            <person name="Purnelle B."/>
            <person name="Rieger M."/>
            <person name="Riles L."/>
            <person name="Rinaldi T."/>
            <person name="Robben J."/>
            <person name="Rodrigues-Pousada C."/>
            <person name="Rodriguez-Belmonte E."/>
            <person name="Rodriguez-Torres A.M."/>
            <person name="Rose M."/>
            <person name="Ruzzi M."/>
            <person name="Saliola M."/>
            <person name="Sanchez-Perez M."/>
            <person name="Schaefer B."/>
            <person name="Schaefer M."/>
            <person name="Scharfe M."/>
            <person name="Schmidheini T."/>
            <person name="Schreer A."/>
            <person name="Skala J."/>
            <person name="Souciet J.-L."/>
            <person name="Steensma H.Y."/>
            <person name="Talla E."/>
            <person name="Thierry A."/>
            <person name="Vandenbol M."/>
            <person name="van der Aart Q.J.M."/>
            <person name="Van Dyck L."/>
            <person name="Vanoni M."/>
            <person name="Verhasselt P."/>
            <person name="Voet M."/>
            <person name="Volckaert G."/>
            <person name="Wambutt R."/>
            <person name="Watson M.D."/>
            <person name="Weber N."/>
            <person name="Wedler E."/>
            <person name="Wedler H."/>
            <person name="Wipfli P."/>
            <person name="Wolf K."/>
            <person name="Wright L.F."/>
            <person name="Zaccaria P."/>
            <person name="Zimmermann M."/>
            <person name="Zollner A."/>
            <person name="Kleine K."/>
        </authorList>
    </citation>
    <scope>NUCLEOTIDE SEQUENCE [LARGE SCALE GENOMIC DNA]</scope>
    <source>
        <strain>ATCC 204508 / S288c</strain>
    </source>
</reference>
<reference key="2">
    <citation type="journal article" date="2014" name="G3 (Bethesda)">
        <title>The reference genome sequence of Saccharomyces cerevisiae: Then and now.</title>
        <authorList>
            <person name="Engel S.R."/>
            <person name="Dietrich F.S."/>
            <person name="Fisk D.G."/>
            <person name="Binkley G."/>
            <person name="Balakrishnan R."/>
            <person name="Costanzo M.C."/>
            <person name="Dwight S.S."/>
            <person name="Hitz B.C."/>
            <person name="Karra K."/>
            <person name="Nash R.S."/>
            <person name="Weng S."/>
            <person name="Wong E.D."/>
            <person name="Lloyd P."/>
            <person name="Skrzypek M.S."/>
            <person name="Miyasato S.R."/>
            <person name="Simison M."/>
            <person name="Cherry J.M."/>
        </authorList>
    </citation>
    <scope>GENOME REANNOTATION</scope>
    <source>
        <strain>ATCC 204508 / S288c</strain>
    </source>
</reference>
<reference key="3">
    <citation type="journal article" date="2002" name="Mol. Biol. Cell">
        <title>Genomic screen for vacuolar protein sorting genes in Saccharomyces cerevisiae.</title>
        <authorList>
            <person name="Bonangelino C.J."/>
            <person name="Chavez E.M."/>
            <person name="Bonifacino J.S."/>
        </authorList>
    </citation>
    <scope>FUNCTION</scope>
</reference>
<reference key="4">
    <citation type="journal article" date="2003" name="Nature">
        <title>Global analysis of protein expression in yeast.</title>
        <authorList>
            <person name="Ghaemmaghami S."/>
            <person name="Huh W.-K."/>
            <person name="Bower K."/>
            <person name="Howson R.W."/>
            <person name="Belle A."/>
            <person name="Dephoure N."/>
            <person name="O'Shea E.K."/>
            <person name="Weissman J.S."/>
        </authorList>
    </citation>
    <scope>LEVEL OF PROTEIN EXPRESSION [LARGE SCALE ANALYSIS]</scope>
</reference>
<keyword id="KW-0325">Glycoprotein</keyword>
<keyword id="KW-0472">Membrane</keyword>
<keyword id="KW-0653">Protein transport</keyword>
<keyword id="KW-1185">Reference proteome</keyword>
<keyword id="KW-0812">Transmembrane</keyword>
<keyword id="KW-1133">Transmembrane helix</keyword>
<keyword id="KW-0813">Transport</keyword>
<protein>
    <recommendedName>
        <fullName>Vacuolar protein sorting-associated protein 62</fullName>
    </recommendedName>
</protein>
<organism>
    <name type="scientific">Saccharomyces cerevisiae (strain ATCC 204508 / S288c)</name>
    <name type="common">Baker's yeast</name>
    <dbReference type="NCBI Taxonomy" id="559292"/>
    <lineage>
        <taxon>Eukaryota</taxon>
        <taxon>Fungi</taxon>
        <taxon>Dikarya</taxon>
        <taxon>Ascomycota</taxon>
        <taxon>Saccharomycotina</taxon>
        <taxon>Saccharomycetes</taxon>
        <taxon>Saccharomycetales</taxon>
        <taxon>Saccharomycetaceae</taxon>
        <taxon>Saccharomyces</taxon>
    </lineage>
</organism>
<accession>P53285</accession>
<accession>D6VUS1</accession>
<comment type="function">
    <text evidence="2">Involved in vacuolar protein sorting.</text>
</comment>
<comment type="subcellular location">
    <subcellularLocation>
        <location>Membrane</location>
        <topology>Single-pass membrane protein</topology>
    </subcellularLocation>
</comment>
<comment type="miscellaneous">
    <text evidence="3">Present with 623 molecules/cell in log phase SD medium.</text>
</comment>
<comment type="similarity">
    <text evidence="4">Belongs to the VPS62 family.</text>
</comment>
<dbReference type="EMBL" id="Z72926">
    <property type="protein sequence ID" value="CAA97154.1"/>
    <property type="molecule type" value="Genomic_DNA"/>
</dbReference>
<dbReference type="EMBL" id="BK006941">
    <property type="protein sequence ID" value="DAA08232.1"/>
    <property type="molecule type" value="Genomic_DNA"/>
</dbReference>
<dbReference type="PIR" id="S64450">
    <property type="entry name" value="S64450"/>
</dbReference>
<dbReference type="RefSeq" id="NP_011657.1">
    <property type="nucleotide sequence ID" value="NM_001181270.1"/>
</dbReference>
<dbReference type="BioGRID" id="33387">
    <property type="interactions" value="94"/>
</dbReference>
<dbReference type="DIP" id="DIP-5532N"/>
<dbReference type="FunCoup" id="P53285">
    <property type="interactions" value="36"/>
</dbReference>
<dbReference type="MINT" id="P53285"/>
<dbReference type="STRING" id="4932.YGR141W"/>
<dbReference type="GlyCosmos" id="P53285">
    <property type="glycosylation" value="2 sites, No reported glycans"/>
</dbReference>
<dbReference type="GlyGen" id="P53285">
    <property type="glycosylation" value="3 sites"/>
</dbReference>
<dbReference type="PaxDb" id="4932-YGR141W"/>
<dbReference type="PeptideAtlas" id="P53285"/>
<dbReference type="EnsemblFungi" id="YGR141W_mRNA">
    <property type="protein sequence ID" value="YGR141W"/>
    <property type="gene ID" value="YGR141W"/>
</dbReference>
<dbReference type="GeneID" id="853042"/>
<dbReference type="KEGG" id="sce:YGR141W"/>
<dbReference type="AGR" id="SGD:S000003373"/>
<dbReference type="SGD" id="S000003373">
    <property type="gene designation" value="VPS62"/>
</dbReference>
<dbReference type="VEuPathDB" id="FungiDB:YGR141W"/>
<dbReference type="eggNOG" id="ENOG502RJPB">
    <property type="taxonomic scope" value="Eukaryota"/>
</dbReference>
<dbReference type="GeneTree" id="ENSGT00940000176347"/>
<dbReference type="HOGENOM" id="CLU_024079_2_0_1"/>
<dbReference type="InParanoid" id="P53285"/>
<dbReference type="OMA" id="DAIWYSQ"/>
<dbReference type="OrthoDB" id="188042at2759"/>
<dbReference type="BioCyc" id="YEAST:G3O-30845-MONOMER"/>
<dbReference type="BioGRID-ORCS" id="853042">
    <property type="hits" value="0 hits in 10 CRISPR screens"/>
</dbReference>
<dbReference type="PRO" id="PR:P53285"/>
<dbReference type="Proteomes" id="UP000002311">
    <property type="component" value="Chromosome VII"/>
</dbReference>
<dbReference type="RNAct" id="P53285">
    <property type="molecule type" value="protein"/>
</dbReference>
<dbReference type="GO" id="GO:0005783">
    <property type="term" value="C:endoplasmic reticulum"/>
    <property type="evidence" value="ECO:0007005"/>
    <property type="project" value="SGD"/>
</dbReference>
<dbReference type="GO" id="GO:0000329">
    <property type="term" value="C:fungal-type vacuole membrane"/>
    <property type="evidence" value="ECO:0007005"/>
    <property type="project" value="SGD"/>
</dbReference>
<dbReference type="GO" id="GO:0006623">
    <property type="term" value="P:protein targeting to vacuole"/>
    <property type="evidence" value="ECO:0007001"/>
    <property type="project" value="SGD"/>
</dbReference>
<dbReference type="InterPro" id="IPR053102">
    <property type="entry name" value="VPS_Associated"/>
</dbReference>
<dbReference type="PANTHER" id="PTHR48220">
    <property type="match status" value="1"/>
</dbReference>
<dbReference type="PANTHER" id="PTHR48220:SF1">
    <property type="entry name" value="VACUOLAR PROTEIN SORTING-ASSOCIATED PROTEIN 62-RELATED"/>
    <property type="match status" value="1"/>
</dbReference>
<name>VPS62_YEAST</name>
<gene>
    <name type="primary">VPS62</name>
    <name type="ordered locus">YGR141W</name>
</gene>